<comment type="function">
    <text evidence="1">Part of the outer membrane protein assembly complex, which is involved in assembly and insertion of beta-barrel proteins into the outer membrane. Constitutes, with BamD, the core component of the assembly machinery.</text>
</comment>
<comment type="subunit">
    <text evidence="1">Part of the Bam complex, which is composed of the outer membrane protein BamA, and four lipoproteins BamB, BamC, BamD and BamE.</text>
</comment>
<comment type="subcellular location">
    <subcellularLocation>
        <location evidence="1">Cell outer membrane</location>
    </subcellularLocation>
</comment>
<comment type="similarity">
    <text evidence="1">Belongs to the BamA family.</text>
</comment>
<name>BAMA_ECOL6</name>
<protein>
    <recommendedName>
        <fullName evidence="1">Outer membrane protein assembly factor BamA</fullName>
    </recommendedName>
</protein>
<organism>
    <name type="scientific">Escherichia coli O6:H1 (strain CFT073 / ATCC 700928 / UPEC)</name>
    <dbReference type="NCBI Taxonomy" id="199310"/>
    <lineage>
        <taxon>Bacteria</taxon>
        <taxon>Pseudomonadati</taxon>
        <taxon>Pseudomonadota</taxon>
        <taxon>Gammaproteobacteria</taxon>
        <taxon>Enterobacterales</taxon>
        <taxon>Enterobacteriaceae</taxon>
        <taxon>Escherichia</taxon>
    </lineage>
</organism>
<keyword id="KW-0998">Cell outer membrane</keyword>
<keyword id="KW-0472">Membrane</keyword>
<keyword id="KW-1185">Reference proteome</keyword>
<keyword id="KW-0677">Repeat</keyword>
<keyword id="KW-0732">Signal</keyword>
<keyword id="KW-0812">Transmembrane</keyword>
<keyword id="KW-1134">Transmembrane beta strand</keyword>
<gene>
    <name evidence="1" type="primary">bamA</name>
    <name type="synonym">yaeT</name>
    <name type="ordered locus">c0214</name>
</gene>
<reference key="1">
    <citation type="journal article" date="2002" name="Proc. Natl. Acad. Sci. U.S.A.">
        <title>Extensive mosaic structure revealed by the complete genome sequence of uropathogenic Escherichia coli.</title>
        <authorList>
            <person name="Welch R.A."/>
            <person name="Burland V."/>
            <person name="Plunkett G. III"/>
            <person name="Redford P."/>
            <person name="Roesch P."/>
            <person name="Rasko D."/>
            <person name="Buckles E.L."/>
            <person name="Liou S.-R."/>
            <person name="Boutin A."/>
            <person name="Hackett J."/>
            <person name="Stroud D."/>
            <person name="Mayhew G.F."/>
            <person name="Rose D.J."/>
            <person name="Zhou S."/>
            <person name="Schwartz D.C."/>
            <person name="Perna N.T."/>
            <person name="Mobley H.L.T."/>
            <person name="Donnenberg M.S."/>
            <person name="Blattner F.R."/>
        </authorList>
    </citation>
    <scope>NUCLEOTIDE SEQUENCE [LARGE SCALE GENOMIC DNA]</scope>
    <source>
        <strain>CFT073 / ATCC 700928 / UPEC</strain>
    </source>
</reference>
<accession>P0A941</accession>
<accession>P39170</accession>
<accession>P39181</accession>
<accession>P77465</accession>
<evidence type="ECO:0000255" key="1">
    <source>
        <dbReference type="HAMAP-Rule" id="MF_01430"/>
    </source>
</evidence>
<evidence type="ECO:0000255" key="2">
    <source>
        <dbReference type="PROSITE-ProRule" id="PRU01115"/>
    </source>
</evidence>
<dbReference type="EMBL" id="AE014075">
    <property type="protein sequence ID" value="AAN78706.1"/>
    <property type="molecule type" value="Genomic_DNA"/>
</dbReference>
<dbReference type="RefSeq" id="WP_001240896.1">
    <property type="nucleotide sequence ID" value="NZ_CP051263.1"/>
</dbReference>
<dbReference type="SMR" id="P0A941"/>
<dbReference type="STRING" id="199310.c0214"/>
<dbReference type="GeneID" id="93777248"/>
<dbReference type="KEGG" id="ecc:c0214"/>
<dbReference type="eggNOG" id="COG4775">
    <property type="taxonomic scope" value="Bacteria"/>
</dbReference>
<dbReference type="HOGENOM" id="CLU_007664_1_0_6"/>
<dbReference type="BioCyc" id="ECOL199310:C0214-MONOMER"/>
<dbReference type="Proteomes" id="UP000001410">
    <property type="component" value="Chromosome"/>
</dbReference>
<dbReference type="GO" id="GO:1990063">
    <property type="term" value="C:Bam protein complex"/>
    <property type="evidence" value="ECO:0007669"/>
    <property type="project" value="TreeGrafter"/>
</dbReference>
<dbReference type="GO" id="GO:0043165">
    <property type="term" value="P:Gram-negative-bacterium-type cell outer membrane assembly"/>
    <property type="evidence" value="ECO:0007669"/>
    <property type="project" value="UniProtKB-UniRule"/>
</dbReference>
<dbReference type="GO" id="GO:0051205">
    <property type="term" value="P:protein insertion into membrane"/>
    <property type="evidence" value="ECO:0007669"/>
    <property type="project" value="UniProtKB-UniRule"/>
</dbReference>
<dbReference type="FunFam" id="2.40.160.50:FF:000001">
    <property type="entry name" value="Outer membrane protein assembly factor BamA"/>
    <property type="match status" value="1"/>
</dbReference>
<dbReference type="FunFam" id="3.10.20.310:FF:000001">
    <property type="entry name" value="Outer membrane protein assembly factor BamA"/>
    <property type="match status" value="1"/>
</dbReference>
<dbReference type="FunFam" id="3.10.20.310:FF:000002">
    <property type="entry name" value="Outer membrane protein assembly factor BamA"/>
    <property type="match status" value="1"/>
</dbReference>
<dbReference type="FunFam" id="3.10.20.310:FF:000003">
    <property type="entry name" value="Outer membrane protein assembly factor BamA"/>
    <property type="match status" value="1"/>
</dbReference>
<dbReference type="FunFam" id="3.10.20.310:FF:000004">
    <property type="entry name" value="Outer membrane protein assembly factor BamA"/>
    <property type="match status" value="1"/>
</dbReference>
<dbReference type="FunFam" id="3.10.20.310:FF:000005">
    <property type="entry name" value="Outer membrane protein assembly factor BamA"/>
    <property type="match status" value="1"/>
</dbReference>
<dbReference type="Gene3D" id="3.10.20.310">
    <property type="entry name" value="membrane protein fhac"/>
    <property type="match status" value="5"/>
</dbReference>
<dbReference type="Gene3D" id="2.40.160.50">
    <property type="entry name" value="membrane protein fhac: a member of the omp85/tpsb transporter family"/>
    <property type="match status" value="1"/>
</dbReference>
<dbReference type="HAMAP" id="MF_01430">
    <property type="entry name" value="OM_assembly_BamA"/>
    <property type="match status" value="1"/>
</dbReference>
<dbReference type="InterPro" id="IPR000184">
    <property type="entry name" value="Bac_surfAg_D15"/>
</dbReference>
<dbReference type="InterPro" id="IPR010827">
    <property type="entry name" value="BamA/TamA_POTRA"/>
</dbReference>
<dbReference type="InterPro" id="IPR039910">
    <property type="entry name" value="D15-like"/>
</dbReference>
<dbReference type="InterPro" id="IPR023707">
    <property type="entry name" value="OM_assembly_BamA"/>
</dbReference>
<dbReference type="InterPro" id="IPR034746">
    <property type="entry name" value="POTRA"/>
</dbReference>
<dbReference type="NCBIfam" id="TIGR03303">
    <property type="entry name" value="OM_YaeT"/>
    <property type="match status" value="1"/>
</dbReference>
<dbReference type="NCBIfam" id="NF008287">
    <property type="entry name" value="PRK11067.1"/>
    <property type="match status" value="1"/>
</dbReference>
<dbReference type="PANTHER" id="PTHR12815:SF23">
    <property type="entry name" value="OUTER MEMBRANE PROTEIN ASSEMBLY FACTOR BAMA"/>
    <property type="match status" value="1"/>
</dbReference>
<dbReference type="PANTHER" id="PTHR12815">
    <property type="entry name" value="SORTING AND ASSEMBLY MACHINERY SAMM50 PROTEIN FAMILY MEMBER"/>
    <property type="match status" value="1"/>
</dbReference>
<dbReference type="Pfam" id="PF01103">
    <property type="entry name" value="Omp85"/>
    <property type="match status" value="1"/>
</dbReference>
<dbReference type="Pfam" id="PF07244">
    <property type="entry name" value="POTRA"/>
    <property type="match status" value="4"/>
</dbReference>
<dbReference type="PIRSF" id="PIRSF006076">
    <property type="entry name" value="OM_assembly_OMP85"/>
    <property type="match status" value="1"/>
</dbReference>
<dbReference type="PROSITE" id="PS51779">
    <property type="entry name" value="POTRA"/>
    <property type="match status" value="5"/>
</dbReference>
<feature type="signal peptide" evidence="1">
    <location>
        <begin position="1"/>
        <end position="20"/>
    </location>
</feature>
<feature type="chain" id="PRO_0000033471" description="Outer membrane protein assembly factor BamA">
    <location>
        <begin position="21"/>
        <end position="810"/>
    </location>
</feature>
<feature type="domain" description="POTRA 1" evidence="2">
    <location>
        <begin position="24"/>
        <end position="91"/>
    </location>
</feature>
<feature type="domain" description="POTRA 2" evidence="2">
    <location>
        <begin position="92"/>
        <end position="172"/>
    </location>
</feature>
<feature type="domain" description="POTRA 3" evidence="2">
    <location>
        <begin position="175"/>
        <end position="263"/>
    </location>
</feature>
<feature type="domain" description="POTRA 4" evidence="2">
    <location>
        <begin position="266"/>
        <end position="344"/>
    </location>
</feature>
<feature type="domain" description="POTRA 5" evidence="2">
    <location>
        <begin position="347"/>
        <end position="421"/>
    </location>
</feature>
<sequence>MAMKKLLIASLLFSSATVYGAEGFVVKDIHFEGLQRVAVGAALLSMPVRTGDTVNDEDISNTIRALFATGNFEDVRVLRDGDTLLVQVKERPTIASITFSGNKSVKDDMLKQNLEASGVRVGESLDRTTIADIEKGLEDFYYSVGKYSASVKAVVTPLPRNRVDLKLVFQEGVSAEIQQINIVGNHAFTTDELISHFQLRDEVPWWNVVGDRKYQKQKLAGDLETLRSYYLDRGYARFNIDSTQVSLTPDKKGIYVTVNITEGDQYKLSGVEVSGNLAGHSAEIEQLTKIEPGELYNGTKVTKMEDDIKKLLGRYGYAYPRVQSMPEINDADKTVKLRVNVDAGNRFYVRKIRFEGNDTSKDAVLRREMRQMEGAWLGSDLVDQGKERLNRLGFFETVDTDTQRVPGSPDQVDVVYKVKERNTGSFNFGIGYGTESGVSFQAGVQQDNWLGTGYAVGINGTKNDYQTYAELSVTNPYFTVDGVSLGGRLFYNDFQADDADLSDYTNKSYGTDVTLGFPINEYNSLRAGLGYVHNSLSNMQPQVAMWRYLYSMGEHPSTSDQDNSFKTDDFTFNYGWTYNKLDRGYFPTDGSRVNLTGKVTIPGSDNEYYKVTLDTATYVPIDDDHKWVVLGRTRWGYGDGLGGKEMPFYENFYAGGSSTVRGFQSNTIGPKAVYFPHQASNYDPDYDYECATQDGAKDLCKSDDAVGGNAMAVASLEFITPTPFISDKYANSVRTSFFWDMGTVWDTNWDSSQYSGYPDYSDPSNIRMSAGIALQWMSPLGPLVFSYAQPFKKYDGDKAEQFQFNIGKTW</sequence>
<proteinExistence type="inferred from homology"/>